<keyword id="KW-0067">ATP-binding</keyword>
<keyword id="KW-0418">Kinase</keyword>
<keyword id="KW-0441">Lipid A biosynthesis</keyword>
<keyword id="KW-0444">Lipid biosynthesis</keyword>
<keyword id="KW-0443">Lipid metabolism</keyword>
<keyword id="KW-0547">Nucleotide-binding</keyword>
<keyword id="KW-1185">Reference proteome</keyword>
<keyword id="KW-0808">Transferase</keyword>
<protein>
    <recommendedName>
        <fullName evidence="1">Tetraacyldisaccharide 4'-kinase</fullName>
        <ecNumber evidence="1">2.7.1.130</ecNumber>
    </recommendedName>
    <alternativeName>
        <fullName evidence="1">Lipid A 4'-kinase</fullName>
    </alternativeName>
</protein>
<organism>
    <name type="scientific">Citrobacter koseri (strain ATCC BAA-895 / CDC 4225-83 / SGSC4696)</name>
    <dbReference type="NCBI Taxonomy" id="290338"/>
    <lineage>
        <taxon>Bacteria</taxon>
        <taxon>Pseudomonadati</taxon>
        <taxon>Pseudomonadota</taxon>
        <taxon>Gammaproteobacteria</taxon>
        <taxon>Enterobacterales</taxon>
        <taxon>Enterobacteriaceae</taxon>
        <taxon>Citrobacter</taxon>
    </lineage>
</organism>
<comment type="function">
    <text evidence="1">Transfers the gamma-phosphate of ATP to the 4'-position of a tetraacyldisaccharide 1-phosphate intermediate (termed DS-1-P) to form tetraacyldisaccharide 1,4'-bis-phosphate (lipid IVA).</text>
</comment>
<comment type="catalytic activity">
    <reaction evidence="1">
        <text>a lipid A disaccharide + ATP = a lipid IVA + ADP + H(+)</text>
        <dbReference type="Rhea" id="RHEA:67840"/>
        <dbReference type="ChEBI" id="CHEBI:15378"/>
        <dbReference type="ChEBI" id="CHEBI:30616"/>
        <dbReference type="ChEBI" id="CHEBI:176343"/>
        <dbReference type="ChEBI" id="CHEBI:176425"/>
        <dbReference type="ChEBI" id="CHEBI:456216"/>
        <dbReference type="EC" id="2.7.1.130"/>
    </reaction>
</comment>
<comment type="pathway">
    <text evidence="1">Glycolipid biosynthesis; lipid IV(A) biosynthesis; lipid IV(A) from (3R)-3-hydroxytetradecanoyl-[acyl-carrier-protein] and UDP-N-acetyl-alpha-D-glucosamine: step 6/6.</text>
</comment>
<comment type="similarity">
    <text evidence="1">Belongs to the LpxK family.</text>
</comment>
<accession>A8AIG6</accession>
<gene>
    <name evidence="1" type="primary">lpxK</name>
    <name type="ordered locus">CKO_02155</name>
</gene>
<name>LPXK_CITK8</name>
<reference key="1">
    <citation type="submission" date="2007-08" db="EMBL/GenBank/DDBJ databases">
        <authorList>
            <consortium name="The Citrobacter koseri Genome Sequencing Project"/>
            <person name="McClelland M."/>
            <person name="Sanderson E.K."/>
            <person name="Porwollik S."/>
            <person name="Spieth J."/>
            <person name="Clifton W.S."/>
            <person name="Latreille P."/>
            <person name="Courtney L."/>
            <person name="Wang C."/>
            <person name="Pepin K."/>
            <person name="Bhonagiri V."/>
            <person name="Nash W."/>
            <person name="Johnson M."/>
            <person name="Thiruvilangam P."/>
            <person name="Wilson R."/>
        </authorList>
    </citation>
    <scope>NUCLEOTIDE SEQUENCE [LARGE SCALE GENOMIC DNA]</scope>
    <source>
        <strain>ATCC BAA-895 / CDC 4225-83 / SGSC4696</strain>
    </source>
</reference>
<proteinExistence type="inferred from homology"/>
<sequence>MIARIWSGESPLWRLLLPLSWLYGLVSGGIRLCYRLGIKRAWRAPVPVVVVGNLTAGGNGKTPVVIWLVEQLQQRGIRVGVVSRGYGGKAASYPLLLTPQTSSAEAGDEPVLIYQRTGAPVAVSPVRSDAVKAILARHDVQIIVTDDGLQHYRLARDIEIVVIDGVRRFGNGWWLPAGPMRERASRLKSVDAVIVNGGVARPGEIPMQLAPGLAVNLCTGERRHVAELSNIVAMAGIGHPPRFFATLEACGASLQKCVPLADHQSLAFNDVKALVTDGQTLVMTEKDAVKCRGFAEDNWWYLPVDARLSGEQPDALLEQLISLAR</sequence>
<dbReference type="EC" id="2.7.1.130" evidence="1"/>
<dbReference type="EMBL" id="CP000822">
    <property type="protein sequence ID" value="ABV13279.1"/>
    <property type="molecule type" value="Genomic_DNA"/>
</dbReference>
<dbReference type="RefSeq" id="WP_012133011.1">
    <property type="nucleotide sequence ID" value="NC_009792.1"/>
</dbReference>
<dbReference type="SMR" id="A8AIG6"/>
<dbReference type="STRING" id="290338.CKO_02155"/>
<dbReference type="GeneID" id="45136094"/>
<dbReference type="KEGG" id="cko:CKO_02155"/>
<dbReference type="HOGENOM" id="CLU_038816_2_0_6"/>
<dbReference type="OrthoDB" id="9766423at2"/>
<dbReference type="UniPathway" id="UPA00359">
    <property type="reaction ID" value="UER00482"/>
</dbReference>
<dbReference type="Proteomes" id="UP000008148">
    <property type="component" value="Chromosome"/>
</dbReference>
<dbReference type="GO" id="GO:0005886">
    <property type="term" value="C:plasma membrane"/>
    <property type="evidence" value="ECO:0007669"/>
    <property type="project" value="TreeGrafter"/>
</dbReference>
<dbReference type="GO" id="GO:0005524">
    <property type="term" value="F:ATP binding"/>
    <property type="evidence" value="ECO:0007669"/>
    <property type="project" value="UniProtKB-UniRule"/>
</dbReference>
<dbReference type="GO" id="GO:0009029">
    <property type="term" value="F:tetraacyldisaccharide 4'-kinase activity"/>
    <property type="evidence" value="ECO:0007669"/>
    <property type="project" value="UniProtKB-UniRule"/>
</dbReference>
<dbReference type="GO" id="GO:0009245">
    <property type="term" value="P:lipid A biosynthetic process"/>
    <property type="evidence" value="ECO:0007669"/>
    <property type="project" value="UniProtKB-UniRule"/>
</dbReference>
<dbReference type="GO" id="GO:0009244">
    <property type="term" value="P:lipopolysaccharide core region biosynthetic process"/>
    <property type="evidence" value="ECO:0007669"/>
    <property type="project" value="TreeGrafter"/>
</dbReference>
<dbReference type="HAMAP" id="MF_00409">
    <property type="entry name" value="LpxK"/>
    <property type="match status" value="1"/>
</dbReference>
<dbReference type="InterPro" id="IPR003758">
    <property type="entry name" value="LpxK"/>
</dbReference>
<dbReference type="InterPro" id="IPR027417">
    <property type="entry name" value="P-loop_NTPase"/>
</dbReference>
<dbReference type="NCBIfam" id="TIGR00682">
    <property type="entry name" value="lpxK"/>
    <property type="match status" value="1"/>
</dbReference>
<dbReference type="PANTHER" id="PTHR42724">
    <property type="entry name" value="TETRAACYLDISACCHARIDE 4'-KINASE"/>
    <property type="match status" value="1"/>
</dbReference>
<dbReference type="PANTHER" id="PTHR42724:SF1">
    <property type="entry name" value="TETRAACYLDISACCHARIDE 4'-KINASE, MITOCHONDRIAL-RELATED"/>
    <property type="match status" value="1"/>
</dbReference>
<dbReference type="Pfam" id="PF02606">
    <property type="entry name" value="LpxK"/>
    <property type="match status" value="1"/>
</dbReference>
<dbReference type="SUPFAM" id="SSF52540">
    <property type="entry name" value="P-loop containing nucleoside triphosphate hydrolases"/>
    <property type="match status" value="1"/>
</dbReference>
<feature type="chain" id="PRO_1000191528" description="Tetraacyldisaccharide 4'-kinase">
    <location>
        <begin position="1"/>
        <end position="325"/>
    </location>
</feature>
<feature type="binding site" evidence="1">
    <location>
        <begin position="55"/>
        <end position="62"/>
    </location>
    <ligand>
        <name>ATP</name>
        <dbReference type="ChEBI" id="CHEBI:30616"/>
    </ligand>
</feature>
<evidence type="ECO:0000255" key="1">
    <source>
        <dbReference type="HAMAP-Rule" id="MF_00409"/>
    </source>
</evidence>